<gene>
    <name type="ordered locus">MT3781</name>
</gene>
<dbReference type="EMBL" id="AE000516">
    <property type="protein sequence ID" value="AAK48148.1"/>
    <property type="molecule type" value="Genomic_DNA"/>
</dbReference>
<dbReference type="PIR" id="H70790">
    <property type="entry name" value="H70790"/>
</dbReference>
<dbReference type="RefSeq" id="WP_003419738.1">
    <property type="nucleotide sequence ID" value="NZ_KK341227.1"/>
</dbReference>
<dbReference type="SMR" id="P9WKX4"/>
<dbReference type="KEGG" id="mtc:MT3781"/>
<dbReference type="PATRIC" id="fig|83331.31.peg.4071"/>
<dbReference type="HOGENOM" id="CLU_058953_0_0_11"/>
<dbReference type="Proteomes" id="UP000001020">
    <property type="component" value="Chromosome"/>
</dbReference>
<dbReference type="GO" id="GO:0005524">
    <property type="term" value="F:ATP binding"/>
    <property type="evidence" value="ECO:0007669"/>
    <property type="project" value="UniProtKB-KW"/>
</dbReference>
<dbReference type="GO" id="GO:0016887">
    <property type="term" value="F:ATP hydrolysis activity"/>
    <property type="evidence" value="ECO:0007669"/>
    <property type="project" value="InterPro"/>
</dbReference>
<dbReference type="Gene3D" id="3.40.50.300">
    <property type="entry name" value="P-loop containing nucleotide triphosphate hydrolases"/>
    <property type="match status" value="1"/>
</dbReference>
<dbReference type="InterPro" id="IPR025723">
    <property type="entry name" value="Anion-transp_ATPase-like_dom"/>
</dbReference>
<dbReference type="InterPro" id="IPR016300">
    <property type="entry name" value="ATPase_ArsA/GET3"/>
</dbReference>
<dbReference type="InterPro" id="IPR027417">
    <property type="entry name" value="P-loop_NTPase"/>
</dbReference>
<dbReference type="PANTHER" id="PTHR10803">
    <property type="entry name" value="ARSENICAL PUMP-DRIVING ATPASE ARSENITE-TRANSLOCATING ATPASE"/>
    <property type="match status" value="1"/>
</dbReference>
<dbReference type="PANTHER" id="PTHR10803:SF31">
    <property type="entry name" value="ATPASE RV3679-RELATED"/>
    <property type="match status" value="1"/>
</dbReference>
<dbReference type="Pfam" id="PF02374">
    <property type="entry name" value="ArsA_ATPase"/>
    <property type="match status" value="2"/>
</dbReference>
<dbReference type="SUPFAM" id="SSF52540">
    <property type="entry name" value="P-loop containing nucleoside triphosphate hydrolases"/>
    <property type="match status" value="1"/>
</dbReference>
<keyword id="KW-0067">ATP-binding</keyword>
<keyword id="KW-0547">Nucleotide-binding</keyword>
<keyword id="KW-1185">Reference proteome</keyword>
<organism>
    <name type="scientific">Mycobacterium tuberculosis (strain CDC 1551 / Oshkosh)</name>
    <dbReference type="NCBI Taxonomy" id="83331"/>
    <lineage>
        <taxon>Bacteria</taxon>
        <taxon>Bacillati</taxon>
        <taxon>Actinomycetota</taxon>
        <taxon>Actinomycetes</taxon>
        <taxon>Mycobacteriales</taxon>
        <taxon>Mycobacteriaceae</taxon>
        <taxon>Mycobacterium</taxon>
        <taxon>Mycobacterium tuberculosis complex</taxon>
    </lineage>
</organism>
<evidence type="ECO:0000255" key="1"/>
<reference key="1">
    <citation type="journal article" date="2002" name="J. Bacteriol.">
        <title>Whole-genome comparison of Mycobacterium tuberculosis clinical and laboratory strains.</title>
        <authorList>
            <person name="Fleischmann R.D."/>
            <person name="Alland D."/>
            <person name="Eisen J.A."/>
            <person name="Carpenter L."/>
            <person name="White O."/>
            <person name="Peterson J.D."/>
            <person name="DeBoy R.T."/>
            <person name="Dodson R.J."/>
            <person name="Gwinn M.L."/>
            <person name="Haft D.H."/>
            <person name="Hickey E.K."/>
            <person name="Kolonay J.F."/>
            <person name="Nelson W.C."/>
            <person name="Umayam L.A."/>
            <person name="Ermolaeva M.D."/>
            <person name="Salzberg S.L."/>
            <person name="Delcher A."/>
            <person name="Utterback T.R."/>
            <person name="Weidman J.F."/>
            <person name="Khouri H.M."/>
            <person name="Gill J."/>
            <person name="Mikula A."/>
            <person name="Bishai W."/>
            <person name="Jacobs W.R. Jr."/>
            <person name="Venter J.C."/>
            <person name="Fraser C.M."/>
        </authorList>
    </citation>
    <scope>NUCLEOTIDE SEQUENCE [LARGE SCALE GENOMIC DNA]</scope>
    <source>
        <strain>CDC 1551 / Oshkosh</strain>
    </source>
</reference>
<proteinExistence type="predicted"/>
<name>Y3679_MYCTO</name>
<protein>
    <recommendedName>
        <fullName>Putative ATPase MT3781</fullName>
    </recommendedName>
</protein>
<sequence length="340" mass="35856">MVATTSSGGSSVGWPSRLSGVRLHLVTGKGGTGKSTIAAALALTLAAGGRKVLLVEVEGRQGIAQLFDVPPLPYQELKIATAERGGQVNALAIDIEAAFLEYLDMFYNLGIAGRAMRRIGAVEFATTIAPGLRDVLLTGKIKETVVRLDKNKLPVYDAIVVDAPPTGRIARFLDVTKAVSDLAKGGPVHAQSEGVVKLLHSNQTAIHLVTLLEALPVQETLEAIEELAQMELPIGSVIVNRNIPAHLEPQDLAKAAEGEVDADSVRAGLLTAGVKLPDADFAGLLTETIQHATRITARAEIAQQLDALQVPRLELPTVSDGVDLGSLYELSESLAQQGVR</sequence>
<accession>P9WKX4</accession>
<accession>L0TD83</accession>
<accession>O69647</accession>
<accession>P65089</accession>
<feature type="chain" id="PRO_0000427578" description="Putative ATPase MT3781">
    <location>
        <begin position="1"/>
        <end position="340"/>
    </location>
</feature>
<feature type="binding site" evidence="1">
    <location>
        <begin position="28"/>
        <end position="35"/>
    </location>
    <ligand>
        <name>ATP</name>
        <dbReference type="ChEBI" id="CHEBI:30616"/>
    </ligand>
</feature>